<feature type="chain" id="PRO_0000091593" description="3-hydroxydecanoyl-[acyl-carrier-protein] dehydratase">
    <location>
        <begin position="1"/>
        <end position="170"/>
    </location>
</feature>
<feature type="active site" evidence="1">
    <location>
        <position position="69"/>
    </location>
</feature>
<sequence length="170" mass="18759">MQKNAYTFEELLACGRGEMFGPGNAQLPAPPMLMFDRIVRIEAEGGKYGKGYVEAEFDIRPDLWFFDCHFIGDPVMPGCLGLDAMWQLVGFFLGWSGGPGRGRALGVGEVKFTGQVTPDIKKVVYKIDLKRVIMRKLVMGIADGVLEADGKVIYETSDLKVGLFTPEQMA</sequence>
<name>FABA_CAUVC</name>
<protein>
    <recommendedName>
        <fullName evidence="1">3-hydroxydecanoyl-[acyl-carrier-protein] dehydratase</fullName>
        <ecNumber evidence="1">4.2.1.59</ecNumber>
    </recommendedName>
    <alternativeName>
        <fullName evidence="1">3-hydroxyacyl-[acyl-carrier-protein] dehydratase FabA</fullName>
    </alternativeName>
    <alternativeName>
        <fullName evidence="1">Beta-hydroxydecanoyl thioester dehydrase</fullName>
    </alternativeName>
    <alternativeName>
        <fullName evidence="1">Trans-2-decenoyl-[acyl-carrier-protein] isomerase</fullName>
        <ecNumber evidence="1">5.3.3.14</ecNumber>
    </alternativeName>
</protein>
<gene>
    <name evidence="1" type="primary">fabA</name>
    <name type="ordered locus">CC_3720</name>
</gene>
<accession>Q9A246</accession>
<keyword id="KW-0963">Cytoplasm</keyword>
<keyword id="KW-0275">Fatty acid biosynthesis</keyword>
<keyword id="KW-0276">Fatty acid metabolism</keyword>
<keyword id="KW-0413">Isomerase</keyword>
<keyword id="KW-0444">Lipid biosynthesis</keyword>
<keyword id="KW-0443">Lipid metabolism</keyword>
<keyword id="KW-0456">Lyase</keyword>
<keyword id="KW-1185">Reference proteome</keyword>
<dbReference type="EC" id="4.2.1.59" evidence="1"/>
<dbReference type="EC" id="5.3.3.14" evidence="1"/>
<dbReference type="EMBL" id="AE005673">
    <property type="protein sequence ID" value="AAK25682.1"/>
    <property type="molecule type" value="Genomic_DNA"/>
</dbReference>
<dbReference type="PIR" id="F87710">
    <property type="entry name" value="F87710"/>
</dbReference>
<dbReference type="RefSeq" id="NP_422514.1">
    <property type="nucleotide sequence ID" value="NC_002696.2"/>
</dbReference>
<dbReference type="RefSeq" id="WP_010921547.1">
    <property type="nucleotide sequence ID" value="NC_002696.2"/>
</dbReference>
<dbReference type="SMR" id="Q9A246"/>
<dbReference type="STRING" id="190650.CC_3720"/>
<dbReference type="EnsemblBacteria" id="AAK25682">
    <property type="protein sequence ID" value="AAK25682"/>
    <property type="gene ID" value="CC_3720"/>
</dbReference>
<dbReference type="KEGG" id="ccr:CC_3720"/>
<dbReference type="PATRIC" id="fig|190650.5.peg.3722"/>
<dbReference type="eggNOG" id="COG0764">
    <property type="taxonomic scope" value="Bacteria"/>
</dbReference>
<dbReference type="HOGENOM" id="CLU_097925_0_0_5"/>
<dbReference type="BioCyc" id="CAULO:CC3720-MONOMER"/>
<dbReference type="UniPathway" id="UPA00094"/>
<dbReference type="Proteomes" id="UP000001816">
    <property type="component" value="Chromosome"/>
</dbReference>
<dbReference type="GO" id="GO:0005737">
    <property type="term" value="C:cytoplasm"/>
    <property type="evidence" value="ECO:0007669"/>
    <property type="project" value="UniProtKB-SubCell"/>
</dbReference>
<dbReference type="GO" id="GO:0019171">
    <property type="term" value="F:(3R)-hydroxyacyl-[acyl-carrier-protein] dehydratase activity"/>
    <property type="evidence" value="ECO:0007669"/>
    <property type="project" value="UniProtKB-UniRule"/>
</dbReference>
<dbReference type="GO" id="GO:0034017">
    <property type="term" value="F:trans-2-decenoyl-acyl-carrier-protein isomerase activity"/>
    <property type="evidence" value="ECO:0007669"/>
    <property type="project" value="UniProtKB-UniRule"/>
</dbReference>
<dbReference type="GO" id="GO:0006636">
    <property type="term" value="P:unsaturated fatty acid biosynthetic process"/>
    <property type="evidence" value="ECO:0007669"/>
    <property type="project" value="UniProtKB-UniRule"/>
</dbReference>
<dbReference type="CDD" id="cd01287">
    <property type="entry name" value="FabA"/>
    <property type="match status" value="1"/>
</dbReference>
<dbReference type="Gene3D" id="3.10.129.10">
    <property type="entry name" value="Hotdog Thioesterase"/>
    <property type="match status" value="1"/>
</dbReference>
<dbReference type="HAMAP" id="MF_00405">
    <property type="entry name" value="FabA"/>
    <property type="match status" value="1"/>
</dbReference>
<dbReference type="InterPro" id="IPR010083">
    <property type="entry name" value="FabA"/>
</dbReference>
<dbReference type="InterPro" id="IPR013114">
    <property type="entry name" value="FabA_FabZ"/>
</dbReference>
<dbReference type="InterPro" id="IPR029069">
    <property type="entry name" value="HotDog_dom_sf"/>
</dbReference>
<dbReference type="NCBIfam" id="TIGR01749">
    <property type="entry name" value="fabA"/>
    <property type="match status" value="1"/>
</dbReference>
<dbReference type="NCBIfam" id="NF003509">
    <property type="entry name" value="PRK05174.1"/>
    <property type="match status" value="1"/>
</dbReference>
<dbReference type="PANTHER" id="PTHR30272">
    <property type="entry name" value="3-HYDROXYACYL-[ACYL-CARRIER-PROTEIN] DEHYDRATASE"/>
    <property type="match status" value="1"/>
</dbReference>
<dbReference type="PANTHER" id="PTHR30272:SF8">
    <property type="entry name" value="3-HYDROXYDECANOYL-[ACYL-CARRIER-PROTEIN] DEHYDRATASE"/>
    <property type="match status" value="1"/>
</dbReference>
<dbReference type="Pfam" id="PF07977">
    <property type="entry name" value="FabA"/>
    <property type="match status" value="1"/>
</dbReference>
<dbReference type="SUPFAM" id="SSF54637">
    <property type="entry name" value="Thioesterase/thiol ester dehydrase-isomerase"/>
    <property type="match status" value="1"/>
</dbReference>
<evidence type="ECO:0000255" key="1">
    <source>
        <dbReference type="HAMAP-Rule" id="MF_00405"/>
    </source>
</evidence>
<proteinExistence type="inferred from homology"/>
<organism>
    <name type="scientific">Caulobacter vibrioides (strain ATCC 19089 / CIP 103742 / CB 15)</name>
    <name type="common">Caulobacter crescentus</name>
    <dbReference type="NCBI Taxonomy" id="190650"/>
    <lineage>
        <taxon>Bacteria</taxon>
        <taxon>Pseudomonadati</taxon>
        <taxon>Pseudomonadota</taxon>
        <taxon>Alphaproteobacteria</taxon>
        <taxon>Caulobacterales</taxon>
        <taxon>Caulobacteraceae</taxon>
        <taxon>Caulobacter</taxon>
    </lineage>
</organism>
<reference key="1">
    <citation type="journal article" date="2001" name="Proc. Natl. Acad. Sci. U.S.A.">
        <title>Complete genome sequence of Caulobacter crescentus.</title>
        <authorList>
            <person name="Nierman W.C."/>
            <person name="Feldblyum T.V."/>
            <person name="Laub M.T."/>
            <person name="Paulsen I.T."/>
            <person name="Nelson K.E."/>
            <person name="Eisen J.A."/>
            <person name="Heidelberg J.F."/>
            <person name="Alley M.R.K."/>
            <person name="Ohta N."/>
            <person name="Maddock J.R."/>
            <person name="Potocka I."/>
            <person name="Nelson W.C."/>
            <person name="Newton A."/>
            <person name="Stephens C."/>
            <person name="Phadke N.D."/>
            <person name="Ely B."/>
            <person name="DeBoy R.T."/>
            <person name="Dodson R.J."/>
            <person name="Durkin A.S."/>
            <person name="Gwinn M.L."/>
            <person name="Haft D.H."/>
            <person name="Kolonay J.F."/>
            <person name="Smit J."/>
            <person name="Craven M.B."/>
            <person name="Khouri H.M."/>
            <person name="Shetty J."/>
            <person name="Berry K.J."/>
            <person name="Utterback T.R."/>
            <person name="Tran K."/>
            <person name="Wolf A.M."/>
            <person name="Vamathevan J.J."/>
            <person name="Ermolaeva M.D."/>
            <person name="White O."/>
            <person name="Salzberg S.L."/>
            <person name="Venter J.C."/>
            <person name="Shapiro L."/>
            <person name="Fraser C.M."/>
        </authorList>
    </citation>
    <scope>NUCLEOTIDE SEQUENCE [LARGE SCALE GENOMIC DNA]</scope>
    <source>
        <strain>ATCC 19089 / CIP 103742 / CB 15</strain>
    </source>
</reference>
<comment type="function">
    <text evidence="1">Necessary for the introduction of cis unsaturation into fatty acids. Catalyzes the dehydration of (3R)-3-hydroxydecanoyl-ACP to E-(2)-decenoyl-ACP and then its isomerization to Z-(3)-decenoyl-ACP. Can catalyze the dehydratase reaction for beta-hydroxyacyl-ACPs with saturated chain lengths up to 16:0, being most active on intermediate chain length.</text>
</comment>
<comment type="catalytic activity">
    <reaction evidence="1">
        <text>a (3R)-hydroxyacyl-[ACP] = a (2E)-enoyl-[ACP] + H2O</text>
        <dbReference type="Rhea" id="RHEA:13097"/>
        <dbReference type="Rhea" id="RHEA-COMP:9925"/>
        <dbReference type="Rhea" id="RHEA-COMP:9945"/>
        <dbReference type="ChEBI" id="CHEBI:15377"/>
        <dbReference type="ChEBI" id="CHEBI:78784"/>
        <dbReference type="ChEBI" id="CHEBI:78827"/>
        <dbReference type="EC" id="4.2.1.59"/>
    </reaction>
</comment>
<comment type="catalytic activity">
    <reaction evidence="1">
        <text>(3R)-hydroxydecanoyl-[ACP] = (2E)-decenoyl-[ACP] + H2O</text>
        <dbReference type="Rhea" id="RHEA:41860"/>
        <dbReference type="Rhea" id="RHEA-COMP:9638"/>
        <dbReference type="Rhea" id="RHEA-COMP:9639"/>
        <dbReference type="ChEBI" id="CHEBI:15377"/>
        <dbReference type="ChEBI" id="CHEBI:78466"/>
        <dbReference type="ChEBI" id="CHEBI:78467"/>
    </reaction>
</comment>
<comment type="catalytic activity">
    <reaction evidence="1">
        <text>(2E)-decenoyl-[ACP] = (3Z)-decenoyl-[ACP]</text>
        <dbReference type="Rhea" id="RHEA:23568"/>
        <dbReference type="Rhea" id="RHEA-COMP:9639"/>
        <dbReference type="Rhea" id="RHEA-COMP:9927"/>
        <dbReference type="ChEBI" id="CHEBI:78467"/>
        <dbReference type="ChEBI" id="CHEBI:78798"/>
        <dbReference type="EC" id="5.3.3.14"/>
    </reaction>
</comment>
<comment type="pathway">
    <text evidence="1">Lipid metabolism; fatty acid biosynthesis.</text>
</comment>
<comment type="subunit">
    <text evidence="1">Homodimer.</text>
</comment>
<comment type="subcellular location">
    <subcellularLocation>
        <location evidence="1">Cytoplasm</location>
    </subcellularLocation>
</comment>
<comment type="similarity">
    <text evidence="1">Belongs to the thioester dehydratase family. FabA subfamily.</text>
</comment>